<comment type="function">
    <text evidence="1">The coatomer is a cytosolic protein complex that binds to dilysine motifs and reversibly associates with Golgi non-clathrin-coated vesicles, which further mediate biosynthetic protein transport from the ER, via the Golgi up to the trans Golgi network. Coatomer complex is required for budding from Golgi membranes, and is essential for the retrograde Golgi-to-ER transport of dilysine-tagged proteins. In mammals, the coatomer can only be recruited by membranes associated to ADP-ribosylation factors (ARFs), which are small GTP-binding proteins; the complex also influences the Golgi structural integrity, as well as the processing, activity, and endocytic recycling of LDL receptors (By similarity).</text>
</comment>
<comment type="subunit">
    <text evidence="1">Oligomeric complex that consists of at least the alpha, beta, beta', gamma, delta, epsilon and zeta subunits.</text>
</comment>
<comment type="subcellular location">
    <subcellularLocation>
        <location evidence="1">Cytoplasm</location>
    </subcellularLocation>
    <subcellularLocation>
        <location evidence="1">Golgi apparatus membrane</location>
        <topology evidence="1">Peripheral membrane protein</topology>
        <orientation evidence="1">Cytoplasmic side</orientation>
    </subcellularLocation>
    <subcellularLocation>
        <location evidence="1">Cytoplasmic vesicle</location>
        <location evidence="1">COPI-coated vesicle membrane</location>
        <topology evidence="1">Peripheral membrane protein</topology>
        <orientation evidence="1">Cytoplasmic side</orientation>
    </subcellularLocation>
    <text evidence="1">The coatomer is cytoplasmic or polymerized on the cytoplasmic side of the Golgi, as well as on the vesicles/buds originating from it.</text>
</comment>
<comment type="similarity">
    <text evidence="6">Belongs to the adaptor complexes medium subunit family. Delta-COP subfamily.</text>
</comment>
<gene>
    <name type="primary">ARCN1</name>
    <name type="synonym">COPD</name>
</gene>
<feature type="chain" id="PRO_0000193843" description="Coatomer subunit delta">
    <location>
        <begin position="1"/>
        <end position="511"/>
    </location>
</feature>
<feature type="domain" description="MHD" evidence="4">
    <location>
        <begin position="271"/>
        <end position="511"/>
    </location>
</feature>
<feature type="region of interest" description="Disordered" evidence="5">
    <location>
        <begin position="167"/>
        <end position="188"/>
    </location>
</feature>
<feature type="compositionally biased region" description="Basic and acidic residues" evidence="5">
    <location>
        <begin position="167"/>
        <end position="177"/>
    </location>
</feature>
<feature type="modified residue" description="Phosphoserine" evidence="2">
    <location>
        <position position="223"/>
    </location>
</feature>
<feature type="modified residue" description="N6-acetyllysine" evidence="2">
    <location>
        <position position="233"/>
    </location>
</feature>
<feature type="modified residue" description="N6-acetyllysine" evidence="3">
    <location>
        <position position="241"/>
    </location>
</feature>
<feature type="modified residue" description="Phosphoserine" evidence="2">
    <location>
        <position position="244"/>
    </location>
</feature>
<feature type="modified residue" description="N6-acetyllysine" evidence="2">
    <location>
        <position position="309"/>
    </location>
</feature>
<feature type="modified residue" description="N6-acetyllysine" evidence="3">
    <location>
        <position position="351"/>
    </location>
</feature>
<feature type="modified residue" description="Phosphoserine" evidence="2">
    <location>
        <position position="493"/>
    </location>
</feature>
<keyword id="KW-0007">Acetylation</keyword>
<keyword id="KW-0963">Cytoplasm</keyword>
<keyword id="KW-0968">Cytoplasmic vesicle</keyword>
<keyword id="KW-0931">ER-Golgi transport</keyword>
<keyword id="KW-0333">Golgi apparatus</keyword>
<keyword id="KW-0472">Membrane</keyword>
<keyword id="KW-0597">Phosphoprotein</keyword>
<keyword id="KW-0653">Protein transport</keyword>
<keyword id="KW-1185">Reference proteome</keyword>
<keyword id="KW-0813">Transport</keyword>
<dbReference type="EMBL" id="CR858065">
    <property type="protein sequence ID" value="CAH90304.1"/>
    <property type="molecule type" value="mRNA"/>
</dbReference>
<dbReference type="EMBL" id="CR859142">
    <property type="protein sequence ID" value="CAH91333.1"/>
    <property type="molecule type" value="mRNA"/>
</dbReference>
<dbReference type="RefSeq" id="NP_001125788.1">
    <property type="nucleotide sequence ID" value="NM_001132316.1"/>
</dbReference>
<dbReference type="SMR" id="Q5RA77"/>
<dbReference type="FunCoup" id="Q5RA77">
    <property type="interactions" value="3535"/>
</dbReference>
<dbReference type="STRING" id="9601.ENSPPYP00000004511"/>
<dbReference type="Ensembl" id="ENSPPYT00000042577.1">
    <property type="protein sequence ID" value="ENSPPYP00000029179.1"/>
    <property type="gene ID" value="ENSPPYG00000003939.3"/>
</dbReference>
<dbReference type="GeneID" id="100172716"/>
<dbReference type="KEGG" id="pon:100172716"/>
<dbReference type="CTD" id="372"/>
<dbReference type="eggNOG" id="KOG2635">
    <property type="taxonomic scope" value="Eukaryota"/>
</dbReference>
<dbReference type="GeneTree" id="ENSGT00390000017207"/>
<dbReference type="InParanoid" id="Q5RA77"/>
<dbReference type="OrthoDB" id="10266042at2759"/>
<dbReference type="Proteomes" id="UP000001595">
    <property type="component" value="Chromosome 11"/>
</dbReference>
<dbReference type="GO" id="GO:0030126">
    <property type="term" value="C:COPI vesicle coat"/>
    <property type="evidence" value="ECO:0007669"/>
    <property type="project" value="InterPro"/>
</dbReference>
<dbReference type="GO" id="GO:0000139">
    <property type="term" value="C:Golgi membrane"/>
    <property type="evidence" value="ECO:0007669"/>
    <property type="project" value="UniProtKB-SubCell"/>
</dbReference>
<dbReference type="GO" id="GO:0006888">
    <property type="term" value="P:endoplasmic reticulum to Golgi vesicle-mediated transport"/>
    <property type="evidence" value="ECO:0007669"/>
    <property type="project" value="TreeGrafter"/>
</dbReference>
<dbReference type="GO" id="GO:0051645">
    <property type="term" value="P:Golgi localization"/>
    <property type="evidence" value="ECO:0007669"/>
    <property type="project" value="TreeGrafter"/>
</dbReference>
<dbReference type="GO" id="GO:0015031">
    <property type="term" value="P:protein transport"/>
    <property type="evidence" value="ECO:0007669"/>
    <property type="project" value="UniProtKB-KW"/>
</dbReference>
<dbReference type="GO" id="GO:0006890">
    <property type="term" value="P:retrograde vesicle-mediated transport, Golgi to endoplasmic reticulum"/>
    <property type="evidence" value="ECO:0007669"/>
    <property type="project" value="InterPro"/>
</dbReference>
<dbReference type="CDD" id="cd09254">
    <property type="entry name" value="AP_delta-COPI_MHD"/>
    <property type="match status" value="1"/>
</dbReference>
<dbReference type="CDD" id="cd14830">
    <property type="entry name" value="Delta_COP_N"/>
    <property type="match status" value="1"/>
</dbReference>
<dbReference type="FunFam" id="2.60.40.1170:FF:000007">
    <property type="entry name" value="Coatomer subunit delta"/>
    <property type="match status" value="1"/>
</dbReference>
<dbReference type="FunFam" id="2.60.40.1170:FF:000011">
    <property type="entry name" value="Coatomer subunit delta"/>
    <property type="match status" value="1"/>
</dbReference>
<dbReference type="FunFam" id="3.30.450.60:FF:000003">
    <property type="entry name" value="Coatomer subunit delta"/>
    <property type="match status" value="1"/>
</dbReference>
<dbReference type="Gene3D" id="3.30.450.60">
    <property type="match status" value="1"/>
</dbReference>
<dbReference type="Gene3D" id="2.60.40.1170">
    <property type="entry name" value="Mu homology domain, subdomain B"/>
    <property type="match status" value="2"/>
</dbReference>
<dbReference type="InterPro" id="IPR036168">
    <property type="entry name" value="AP2_Mu_C_sf"/>
</dbReference>
<dbReference type="InterPro" id="IPR022775">
    <property type="entry name" value="AP_mu_sigma_su"/>
</dbReference>
<dbReference type="InterPro" id="IPR027059">
    <property type="entry name" value="Coatomer_dsu"/>
</dbReference>
<dbReference type="InterPro" id="IPR011012">
    <property type="entry name" value="Longin-like_dom_sf"/>
</dbReference>
<dbReference type="InterPro" id="IPR028565">
    <property type="entry name" value="MHD"/>
</dbReference>
<dbReference type="PANTHER" id="PTHR10121">
    <property type="entry name" value="COATOMER SUBUNIT DELTA"/>
    <property type="match status" value="1"/>
</dbReference>
<dbReference type="PANTHER" id="PTHR10121:SF0">
    <property type="entry name" value="COATOMER SUBUNIT DELTA"/>
    <property type="match status" value="1"/>
</dbReference>
<dbReference type="Pfam" id="PF00928">
    <property type="entry name" value="Adap_comp_sub"/>
    <property type="match status" value="1"/>
</dbReference>
<dbReference type="Pfam" id="PF01217">
    <property type="entry name" value="Clat_adaptor_s"/>
    <property type="match status" value="1"/>
</dbReference>
<dbReference type="SUPFAM" id="SSF49447">
    <property type="entry name" value="Second domain of Mu2 adaptin subunit (ap50) of ap2 adaptor"/>
    <property type="match status" value="1"/>
</dbReference>
<dbReference type="SUPFAM" id="SSF64356">
    <property type="entry name" value="SNARE-like"/>
    <property type="match status" value="1"/>
</dbReference>
<dbReference type="PROSITE" id="PS51072">
    <property type="entry name" value="MHD"/>
    <property type="match status" value="1"/>
</dbReference>
<proteinExistence type="evidence at transcript level"/>
<name>COPD_PONAB</name>
<sequence>MVLLAAAVCTKAGKAIVSRQFVEMTRTRIEGLLAAFPKLMNTGKQHTFVETESVRYVYQPMEKLYMVLITTKNSNILEDLETLRLFSRVIPEYCRALEENEISEHCFDLIFAFDEIVALGYRENVNLAQIRTFTEMDSHEEKVFRAVRETQEREAKAEMRRKAKELQQARRDAERQGKKAPGFGGFGSSAVSGGSTAAMITETIIETDKPKVAPAPARPSGPSKALKLGAKGKEVDNFVDKLKSEGETIMSSSMGKRTSEASKMHAPPINMESVHMKIEEKITLTCGRDGGLQNMELHGMIMLRISDDKYGRIRLHVENEDKKGVQLQTHPNVDKKLFTAESLIGLKNPEKSFPVNSDVGVLKWRLQTTEESFIPLTINCWPSESGNGCDVNIEYELQEDNLELNDVVITIPLPSGVGAPVIGEIDGEYRHDSRRNTLEWCLPVIDAKNKSGSLEFSIAGQPNDFFPVQVSFVSKKNYCNIQVTKVTQVDGNSPVRFSTETTFLVDKYEIL</sequence>
<protein>
    <recommendedName>
        <fullName>Coatomer subunit delta</fullName>
    </recommendedName>
    <alternativeName>
        <fullName>Archain</fullName>
    </alternativeName>
    <alternativeName>
        <fullName>Delta-coat protein</fullName>
        <shortName>Delta-COP</shortName>
    </alternativeName>
</protein>
<accession>Q5RA77</accession>
<organism>
    <name type="scientific">Pongo abelii</name>
    <name type="common">Sumatran orangutan</name>
    <name type="synonym">Pongo pygmaeus abelii</name>
    <dbReference type="NCBI Taxonomy" id="9601"/>
    <lineage>
        <taxon>Eukaryota</taxon>
        <taxon>Metazoa</taxon>
        <taxon>Chordata</taxon>
        <taxon>Craniata</taxon>
        <taxon>Vertebrata</taxon>
        <taxon>Euteleostomi</taxon>
        <taxon>Mammalia</taxon>
        <taxon>Eutheria</taxon>
        <taxon>Euarchontoglires</taxon>
        <taxon>Primates</taxon>
        <taxon>Haplorrhini</taxon>
        <taxon>Catarrhini</taxon>
        <taxon>Hominidae</taxon>
        <taxon>Pongo</taxon>
    </lineage>
</organism>
<evidence type="ECO:0000250" key="1"/>
<evidence type="ECO:0000250" key="2">
    <source>
        <dbReference type="UniProtKB" id="P48444"/>
    </source>
</evidence>
<evidence type="ECO:0000250" key="3">
    <source>
        <dbReference type="UniProtKB" id="Q5XJY5"/>
    </source>
</evidence>
<evidence type="ECO:0000255" key="4">
    <source>
        <dbReference type="PROSITE-ProRule" id="PRU00404"/>
    </source>
</evidence>
<evidence type="ECO:0000256" key="5">
    <source>
        <dbReference type="SAM" id="MobiDB-lite"/>
    </source>
</evidence>
<evidence type="ECO:0000305" key="6"/>
<reference key="1">
    <citation type="submission" date="2004-11" db="EMBL/GenBank/DDBJ databases">
        <authorList>
            <consortium name="The German cDNA consortium"/>
        </authorList>
    </citation>
    <scope>NUCLEOTIDE SEQUENCE [LARGE SCALE MRNA]</scope>
    <source>
        <tissue>Brain cortex</tissue>
    </source>
</reference>